<feature type="chain" id="PRO_1000214549" description="Large ribosomal subunit protein uL24">
    <location>
        <begin position="1"/>
        <end position="107"/>
    </location>
</feature>
<keyword id="KW-1185">Reference proteome</keyword>
<keyword id="KW-0687">Ribonucleoprotein</keyword>
<keyword id="KW-0689">Ribosomal protein</keyword>
<keyword id="KW-0694">RNA-binding</keyword>
<keyword id="KW-0699">rRNA-binding</keyword>
<evidence type="ECO:0000255" key="1">
    <source>
        <dbReference type="HAMAP-Rule" id="MF_01326"/>
    </source>
</evidence>
<evidence type="ECO:0000305" key="2"/>
<accession>C5CGQ3</accession>
<reference key="1">
    <citation type="submission" date="2009-06" db="EMBL/GenBank/DDBJ databases">
        <title>Complete sequence of Thermotogales bacterium TBF 19.5.1.</title>
        <authorList>
            <consortium name="US DOE Joint Genome Institute"/>
            <person name="Lucas S."/>
            <person name="Copeland A."/>
            <person name="Lapidus A."/>
            <person name="Glavina del Rio T."/>
            <person name="Tice H."/>
            <person name="Bruce D."/>
            <person name="Goodwin L."/>
            <person name="Pitluck S."/>
            <person name="Chertkov O."/>
            <person name="Brettin T."/>
            <person name="Detter J.C."/>
            <person name="Han C."/>
            <person name="Schmutz J."/>
            <person name="Larimer F."/>
            <person name="Land M."/>
            <person name="Hauser L."/>
            <person name="Kyrpides N."/>
            <person name="Ovchinnikova G."/>
            <person name="Noll K."/>
        </authorList>
    </citation>
    <scope>NUCLEOTIDE SEQUENCE [LARGE SCALE GENOMIC DNA]</scope>
    <source>
        <strain>ATCC BAA-1733 / DSM 21960 / TBF 19.5.1</strain>
    </source>
</reference>
<proteinExistence type="inferred from homology"/>
<dbReference type="EMBL" id="CP001634">
    <property type="protein sequence ID" value="ACR80572.1"/>
    <property type="molecule type" value="Genomic_DNA"/>
</dbReference>
<dbReference type="SMR" id="C5CGQ3"/>
<dbReference type="STRING" id="521045.Kole_1891"/>
<dbReference type="KEGG" id="kol:Kole_1891"/>
<dbReference type="eggNOG" id="COG0198">
    <property type="taxonomic scope" value="Bacteria"/>
</dbReference>
<dbReference type="HOGENOM" id="CLU_093315_2_0_0"/>
<dbReference type="Proteomes" id="UP000002382">
    <property type="component" value="Chromosome"/>
</dbReference>
<dbReference type="GO" id="GO:1990904">
    <property type="term" value="C:ribonucleoprotein complex"/>
    <property type="evidence" value="ECO:0007669"/>
    <property type="project" value="UniProtKB-KW"/>
</dbReference>
<dbReference type="GO" id="GO:0005840">
    <property type="term" value="C:ribosome"/>
    <property type="evidence" value="ECO:0007669"/>
    <property type="project" value="UniProtKB-KW"/>
</dbReference>
<dbReference type="GO" id="GO:0019843">
    <property type="term" value="F:rRNA binding"/>
    <property type="evidence" value="ECO:0007669"/>
    <property type="project" value="UniProtKB-UniRule"/>
</dbReference>
<dbReference type="GO" id="GO:0003735">
    <property type="term" value="F:structural constituent of ribosome"/>
    <property type="evidence" value="ECO:0007669"/>
    <property type="project" value="InterPro"/>
</dbReference>
<dbReference type="GO" id="GO:0006412">
    <property type="term" value="P:translation"/>
    <property type="evidence" value="ECO:0007669"/>
    <property type="project" value="UniProtKB-UniRule"/>
</dbReference>
<dbReference type="CDD" id="cd06089">
    <property type="entry name" value="KOW_RPL26"/>
    <property type="match status" value="1"/>
</dbReference>
<dbReference type="FunFam" id="2.30.30.30:FF:000004">
    <property type="entry name" value="50S ribosomal protein L24"/>
    <property type="match status" value="1"/>
</dbReference>
<dbReference type="Gene3D" id="2.30.30.30">
    <property type="match status" value="1"/>
</dbReference>
<dbReference type="HAMAP" id="MF_01326_B">
    <property type="entry name" value="Ribosomal_uL24_B"/>
    <property type="match status" value="1"/>
</dbReference>
<dbReference type="InterPro" id="IPR005824">
    <property type="entry name" value="KOW"/>
</dbReference>
<dbReference type="InterPro" id="IPR014722">
    <property type="entry name" value="Rib_uL2_dom2"/>
</dbReference>
<dbReference type="InterPro" id="IPR003256">
    <property type="entry name" value="Ribosomal_uL24"/>
</dbReference>
<dbReference type="InterPro" id="IPR005825">
    <property type="entry name" value="Ribosomal_uL24_CS"/>
</dbReference>
<dbReference type="InterPro" id="IPR041988">
    <property type="entry name" value="Ribosomal_uL24_KOW"/>
</dbReference>
<dbReference type="InterPro" id="IPR008991">
    <property type="entry name" value="Translation_prot_SH3-like_sf"/>
</dbReference>
<dbReference type="NCBIfam" id="TIGR01079">
    <property type="entry name" value="rplX_bact"/>
    <property type="match status" value="1"/>
</dbReference>
<dbReference type="PANTHER" id="PTHR12903">
    <property type="entry name" value="MITOCHONDRIAL RIBOSOMAL PROTEIN L24"/>
    <property type="match status" value="1"/>
</dbReference>
<dbReference type="Pfam" id="PF00467">
    <property type="entry name" value="KOW"/>
    <property type="match status" value="1"/>
</dbReference>
<dbReference type="Pfam" id="PF17136">
    <property type="entry name" value="ribosomal_L24"/>
    <property type="match status" value="1"/>
</dbReference>
<dbReference type="SMART" id="SM00739">
    <property type="entry name" value="KOW"/>
    <property type="match status" value="1"/>
</dbReference>
<dbReference type="SUPFAM" id="SSF50104">
    <property type="entry name" value="Translation proteins SH3-like domain"/>
    <property type="match status" value="1"/>
</dbReference>
<dbReference type="PROSITE" id="PS01108">
    <property type="entry name" value="RIBOSOMAL_L24"/>
    <property type="match status" value="1"/>
</dbReference>
<comment type="function">
    <text evidence="1">One of two assembly initiator proteins, it binds directly to the 5'-end of the 23S rRNA, where it nucleates assembly of the 50S subunit.</text>
</comment>
<comment type="function">
    <text evidence="1">One of the proteins that surrounds the polypeptide exit tunnel on the outside of the subunit.</text>
</comment>
<comment type="subunit">
    <text evidence="1">Part of the 50S ribosomal subunit.</text>
</comment>
<comment type="similarity">
    <text evidence="1">Belongs to the universal ribosomal protein uL24 family.</text>
</comment>
<organism>
    <name type="scientific">Kosmotoga olearia (strain ATCC BAA-1733 / DSM 21960 / TBF 19.5.1)</name>
    <dbReference type="NCBI Taxonomy" id="521045"/>
    <lineage>
        <taxon>Bacteria</taxon>
        <taxon>Thermotogati</taxon>
        <taxon>Thermotogota</taxon>
        <taxon>Thermotogae</taxon>
        <taxon>Kosmotogales</taxon>
        <taxon>Kosmotogaceae</taxon>
        <taxon>Kosmotoga</taxon>
    </lineage>
</organism>
<sequence length="107" mass="12055">MGMRIKKDDTVKVISGEYKGKIGKVLKTLPKEGKVIIEGVNFTKRHQRPTNQYREGGIIEREAPIYACKVMVVCPNCDKPTRVGHKKLESGEKVRVCKKCGEIIDKV</sequence>
<protein>
    <recommendedName>
        <fullName evidence="1">Large ribosomal subunit protein uL24</fullName>
    </recommendedName>
    <alternativeName>
        <fullName evidence="2">50S ribosomal protein L24</fullName>
    </alternativeName>
</protein>
<name>RL24_KOSOT</name>
<gene>
    <name evidence="1" type="primary">rplX</name>
    <name type="ordered locus">Kole_1891</name>
</gene>